<dbReference type="EC" id="3.1.1.4"/>
<dbReference type="PIR" id="B26279">
    <property type="entry name" value="B26279"/>
</dbReference>
<dbReference type="SMR" id="P18997"/>
<dbReference type="GO" id="GO:0005576">
    <property type="term" value="C:extracellular region"/>
    <property type="evidence" value="ECO:0007669"/>
    <property type="project" value="UniProtKB-SubCell"/>
</dbReference>
<dbReference type="GO" id="GO:0005509">
    <property type="term" value="F:calcium ion binding"/>
    <property type="evidence" value="ECO:0007669"/>
    <property type="project" value="InterPro"/>
</dbReference>
<dbReference type="GO" id="GO:0004623">
    <property type="term" value="F:phospholipase A2 activity"/>
    <property type="evidence" value="ECO:0007669"/>
    <property type="project" value="UniProtKB-EC"/>
</dbReference>
<dbReference type="GO" id="GO:0090729">
    <property type="term" value="F:toxin activity"/>
    <property type="evidence" value="ECO:0007669"/>
    <property type="project" value="UniProtKB-KW"/>
</dbReference>
<dbReference type="GO" id="GO:0050482">
    <property type="term" value="P:arachidonate secretion"/>
    <property type="evidence" value="ECO:0007669"/>
    <property type="project" value="InterPro"/>
</dbReference>
<dbReference type="GO" id="GO:0016042">
    <property type="term" value="P:lipid catabolic process"/>
    <property type="evidence" value="ECO:0007669"/>
    <property type="project" value="UniProtKB-KW"/>
</dbReference>
<dbReference type="GO" id="GO:0006644">
    <property type="term" value="P:phospholipid metabolic process"/>
    <property type="evidence" value="ECO:0007669"/>
    <property type="project" value="InterPro"/>
</dbReference>
<dbReference type="Gene3D" id="1.20.90.10">
    <property type="entry name" value="Phospholipase A2 domain"/>
    <property type="match status" value="1"/>
</dbReference>
<dbReference type="InterPro" id="IPR001211">
    <property type="entry name" value="PLipase_A2"/>
</dbReference>
<dbReference type="InterPro" id="IPR016090">
    <property type="entry name" value="PLipase_A2_dom"/>
</dbReference>
<dbReference type="InterPro" id="IPR036444">
    <property type="entry name" value="PLipase_A2_dom_sf"/>
</dbReference>
<dbReference type="Pfam" id="PF00068">
    <property type="entry name" value="Phospholip_A2_1"/>
    <property type="match status" value="1"/>
</dbReference>
<dbReference type="PRINTS" id="PR00389">
    <property type="entry name" value="PHPHLIPASEA2"/>
</dbReference>
<dbReference type="SUPFAM" id="SSF48619">
    <property type="entry name" value="Phospholipase A2, PLA2"/>
    <property type="match status" value="1"/>
</dbReference>
<sequence>NLLQFRKMIKKMTGKEVVWYAFYGCYCGGGGK</sequence>
<name>PA2B_GLOHA</name>
<evidence type="ECO:0000250" key="1"/>
<evidence type="ECO:0000255" key="2">
    <source>
        <dbReference type="PROSITE-ProRule" id="PRU10035"/>
    </source>
</evidence>
<evidence type="ECO:0000255" key="3">
    <source>
        <dbReference type="PROSITE-ProRule" id="PRU10036"/>
    </source>
</evidence>
<evidence type="ECO:0000305" key="4"/>
<reference key="1">
    <citation type="journal article" date="1987" name="Toxicon">
        <title>Characterization of the structure and function of three phospholipases A2 from the venom of Agkistrodon halys pallas.</title>
        <authorList>
            <person name="Chen Y.-C."/>
            <person name="Maraganore J.M."/>
            <person name="Reardon I."/>
            <person name="Heinrikson R.L."/>
        </authorList>
    </citation>
    <scope>PROTEIN SEQUENCE</scope>
    <source>
        <tissue>Venom</tissue>
    </source>
</reference>
<protein>
    <recommendedName>
        <fullName>Basic phospholipase A2</fullName>
        <shortName>svPLA2</shortName>
        <ecNumber>3.1.1.4</ecNumber>
    </recommendedName>
    <alternativeName>
        <fullName>Phosphatidylcholine 2-acylhydrolase</fullName>
    </alternativeName>
</protein>
<proteinExistence type="evidence at protein level"/>
<organism>
    <name type="scientific">Gloydius halys</name>
    <name type="common">Chinese water mocassin</name>
    <name type="synonym">Agkistrodon halys</name>
    <dbReference type="NCBI Taxonomy" id="8714"/>
    <lineage>
        <taxon>Eukaryota</taxon>
        <taxon>Metazoa</taxon>
        <taxon>Chordata</taxon>
        <taxon>Craniata</taxon>
        <taxon>Vertebrata</taxon>
        <taxon>Euteleostomi</taxon>
        <taxon>Lepidosauria</taxon>
        <taxon>Squamata</taxon>
        <taxon>Bifurcata</taxon>
        <taxon>Unidentata</taxon>
        <taxon>Episquamata</taxon>
        <taxon>Toxicofera</taxon>
        <taxon>Serpentes</taxon>
        <taxon>Colubroidea</taxon>
        <taxon>Viperidae</taxon>
        <taxon>Crotalinae</taxon>
        <taxon>Gloydius</taxon>
    </lineage>
</organism>
<keyword id="KW-0106">Calcium</keyword>
<keyword id="KW-0903">Direct protein sequencing</keyword>
<keyword id="KW-0378">Hydrolase</keyword>
<keyword id="KW-0442">Lipid degradation</keyword>
<keyword id="KW-0443">Lipid metabolism</keyword>
<keyword id="KW-0479">Metal-binding</keyword>
<keyword id="KW-0528">Neurotoxin</keyword>
<keyword id="KW-0638">Presynaptic neurotoxin</keyword>
<keyword id="KW-0964">Secreted</keyword>
<keyword id="KW-0800">Toxin</keyword>
<comment type="function">
    <text>Snake venom phospholipase A2 (PLA2) that inhibits neuromuscular transmission by blocking acetylcholine release from the nerve termini. PLA2 catalyzes the calcium-dependent hydrolysis of the 2-acyl groups in 3-sn-phosphoglycerides.</text>
</comment>
<comment type="catalytic activity">
    <reaction evidence="2 3">
        <text>a 1,2-diacyl-sn-glycero-3-phosphocholine + H2O = a 1-acyl-sn-glycero-3-phosphocholine + a fatty acid + H(+)</text>
        <dbReference type="Rhea" id="RHEA:15801"/>
        <dbReference type="ChEBI" id="CHEBI:15377"/>
        <dbReference type="ChEBI" id="CHEBI:15378"/>
        <dbReference type="ChEBI" id="CHEBI:28868"/>
        <dbReference type="ChEBI" id="CHEBI:57643"/>
        <dbReference type="ChEBI" id="CHEBI:58168"/>
        <dbReference type="EC" id="3.1.1.4"/>
    </reaction>
</comment>
<comment type="cofactor">
    <cofactor evidence="1">
        <name>Ca(2+)</name>
        <dbReference type="ChEBI" id="CHEBI:29108"/>
    </cofactor>
    <text evidence="1">Binds 1 Ca(2+) ion.</text>
</comment>
<comment type="subcellular location">
    <subcellularLocation>
        <location>Secreted</location>
    </subcellularLocation>
</comment>
<comment type="tissue specificity">
    <text>Expressed by the venom gland.</text>
</comment>
<comment type="similarity">
    <text evidence="4">Belongs to the phospholipase A2 family. Group II subfamily.</text>
</comment>
<feature type="chain" id="PRO_0000161598" description="Basic phospholipase A2">
    <location>
        <begin position="1"/>
        <end position="32" status="greater than"/>
    </location>
</feature>
<feature type="binding site" evidence="1">
    <location>
        <position position="26"/>
    </location>
    <ligand>
        <name>Ca(2+)</name>
        <dbReference type="ChEBI" id="CHEBI:29108"/>
    </ligand>
</feature>
<feature type="binding site" evidence="1">
    <location>
        <position position="28"/>
    </location>
    <ligand>
        <name>Ca(2+)</name>
        <dbReference type="ChEBI" id="CHEBI:29108"/>
    </ligand>
</feature>
<feature type="binding site" evidence="1">
    <location>
        <position position="30"/>
    </location>
    <ligand>
        <name>Ca(2+)</name>
        <dbReference type="ChEBI" id="CHEBI:29108"/>
    </ligand>
</feature>
<feature type="non-terminal residue">
    <location>
        <position position="32"/>
    </location>
</feature>
<accession>P18997</accession>